<protein>
    <recommendedName>
        <fullName evidence="1">Isoprenyl transferase</fullName>
        <ecNumber evidence="1">2.5.1.-</ecNumber>
    </recommendedName>
</protein>
<accession>Q8KFQ5</accession>
<dbReference type="EC" id="2.5.1.-" evidence="1"/>
<dbReference type="EMBL" id="AE006470">
    <property type="protein sequence ID" value="AAM71513.1"/>
    <property type="molecule type" value="Genomic_DNA"/>
</dbReference>
<dbReference type="RefSeq" id="NP_661171.1">
    <property type="nucleotide sequence ID" value="NC_002932.3"/>
</dbReference>
<dbReference type="RefSeq" id="WP_010931959.1">
    <property type="nucleotide sequence ID" value="NC_002932.3"/>
</dbReference>
<dbReference type="SMR" id="Q8KFQ5"/>
<dbReference type="STRING" id="194439.CT0267"/>
<dbReference type="EnsemblBacteria" id="AAM71513">
    <property type="protein sequence ID" value="AAM71513"/>
    <property type="gene ID" value="CT0267"/>
</dbReference>
<dbReference type="KEGG" id="cte:CT0267"/>
<dbReference type="PATRIC" id="fig|194439.7.peg.259"/>
<dbReference type="eggNOG" id="COG0020">
    <property type="taxonomic scope" value="Bacteria"/>
</dbReference>
<dbReference type="HOGENOM" id="CLU_038505_1_1_10"/>
<dbReference type="OrthoDB" id="4191603at2"/>
<dbReference type="Proteomes" id="UP000001007">
    <property type="component" value="Chromosome"/>
</dbReference>
<dbReference type="GO" id="GO:0045547">
    <property type="term" value="F:ditrans,polycis-polyprenyl diphosphate synthase [(2E,6E)-farnesyl diphosphate specific] activity"/>
    <property type="evidence" value="ECO:0007669"/>
    <property type="project" value="TreeGrafter"/>
</dbReference>
<dbReference type="GO" id="GO:0000287">
    <property type="term" value="F:magnesium ion binding"/>
    <property type="evidence" value="ECO:0007669"/>
    <property type="project" value="UniProtKB-UniRule"/>
</dbReference>
<dbReference type="GO" id="GO:0016094">
    <property type="term" value="P:polyprenol biosynthetic process"/>
    <property type="evidence" value="ECO:0007669"/>
    <property type="project" value="TreeGrafter"/>
</dbReference>
<dbReference type="CDD" id="cd00475">
    <property type="entry name" value="Cis_IPPS"/>
    <property type="match status" value="1"/>
</dbReference>
<dbReference type="FunFam" id="3.40.1180.10:FF:000001">
    <property type="entry name" value="(2E,6E)-farnesyl-diphosphate-specific ditrans,polycis-undecaprenyl-diphosphate synthase"/>
    <property type="match status" value="1"/>
</dbReference>
<dbReference type="Gene3D" id="3.40.1180.10">
    <property type="entry name" value="Decaprenyl diphosphate synthase-like"/>
    <property type="match status" value="1"/>
</dbReference>
<dbReference type="HAMAP" id="MF_01139">
    <property type="entry name" value="ISPT"/>
    <property type="match status" value="1"/>
</dbReference>
<dbReference type="InterPro" id="IPR001441">
    <property type="entry name" value="UPP_synth-like"/>
</dbReference>
<dbReference type="InterPro" id="IPR018520">
    <property type="entry name" value="UPP_synth-like_CS"/>
</dbReference>
<dbReference type="InterPro" id="IPR036424">
    <property type="entry name" value="UPP_synth-like_sf"/>
</dbReference>
<dbReference type="NCBIfam" id="NF011405">
    <property type="entry name" value="PRK14830.1"/>
    <property type="match status" value="1"/>
</dbReference>
<dbReference type="NCBIfam" id="TIGR00055">
    <property type="entry name" value="uppS"/>
    <property type="match status" value="1"/>
</dbReference>
<dbReference type="PANTHER" id="PTHR10291:SF0">
    <property type="entry name" value="DEHYDRODOLICHYL DIPHOSPHATE SYNTHASE 2"/>
    <property type="match status" value="1"/>
</dbReference>
<dbReference type="PANTHER" id="PTHR10291">
    <property type="entry name" value="DEHYDRODOLICHYL DIPHOSPHATE SYNTHASE FAMILY MEMBER"/>
    <property type="match status" value="1"/>
</dbReference>
<dbReference type="Pfam" id="PF01255">
    <property type="entry name" value="Prenyltransf"/>
    <property type="match status" value="1"/>
</dbReference>
<dbReference type="SUPFAM" id="SSF64005">
    <property type="entry name" value="Undecaprenyl diphosphate synthase"/>
    <property type="match status" value="1"/>
</dbReference>
<dbReference type="PROSITE" id="PS01066">
    <property type="entry name" value="UPP_SYNTHASE"/>
    <property type="match status" value="1"/>
</dbReference>
<proteinExistence type="inferred from homology"/>
<gene>
    <name evidence="1" type="primary">uppS</name>
    <name type="ordered locus">CT0267</name>
</gene>
<evidence type="ECO:0000255" key="1">
    <source>
        <dbReference type="HAMAP-Rule" id="MF_01139"/>
    </source>
</evidence>
<name>ISPT_CHLTE</name>
<keyword id="KW-0460">Magnesium</keyword>
<keyword id="KW-0479">Metal-binding</keyword>
<keyword id="KW-1185">Reference proteome</keyword>
<keyword id="KW-0808">Transferase</keyword>
<reference key="1">
    <citation type="journal article" date="2002" name="Proc. Natl. Acad. Sci. U.S.A.">
        <title>The complete genome sequence of Chlorobium tepidum TLS, a photosynthetic, anaerobic, green-sulfur bacterium.</title>
        <authorList>
            <person name="Eisen J.A."/>
            <person name="Nelson K.E."/>
            <person name="Paulsen I.T."/>
            <person name="Heidelberg J.F."/>
            <person name="Wu M."/>
            <person name="Dodson R.J."/>
            <person name="DeBoy R.T."/>
            <person name="Gwinn M.L."/>
            <person name="Nelson W.C."/>
            <person name="Haft D.H."/>
            <person name="Hickey E.K."/>
            <person name="Peterson J.D."/>
            <person name="Durkin A.S."/>
            <person name="Kolonay J.F."/>
            <person name="Yang F."/>
            <person name="Holt I.E."/>
            <person name="Umayam L.A."/>
            <person name="Mason T.M."/>
            <person name="Brenner M."/>
            <person name="Shea T.P."/>
            <person name="Parksey D.S."/>
            <person name="Nierman W.C."/>
            <person name="Feldblyum T.V."/>
            <person name="Hansen C.L."/>
            <person name="Craven M.B."/>
            <person name="Radune D."/>
            <person name="Vamathevan J.J."/>
            <person name="Khouri H.M."/>
            <person name="White O."/>
            <person name="Gruber T.M."/>
            <person name="Ketchum K.A."/>
            <person name="Venter J.C."/>
            <person name="Tettelin H."/>
            <person name="Bryant D.A."/>
            <person name="Fraser C.M."/>
        </authorList>
    </citation>
    <scope>NUCLEOTIDE SEQUENCE [LARGE SCALE GENOMIC DNA]</scope>
    <source>
        <strain>ATCC 49652 / DSM 12025 / NBRC 103806 / TLS</strain>
    </source>
</reference>
<organism>
    <name type="scientific">Chlorobaculum tepidum (strain ATCC 49652 / DSM 12025 / NBRC 103806 / TLS)</name>
    <name type="common">Chlorobium tepidum</name>
    <dbReference type="NCBI Taxonomy" id="194439"/>
    <lineage>
        <taxon>Bacteria</taxon>
        <taxon>Pseudomonadati</taxon>
        <taxon>Chlorobiota</taxon>
        <taxon>Chlorobiia</taxon>
        <taxon>Chlorobiales</taxon>
        <taxon>Chlorobiaceae</taxon>
        <taxon>Chlorobaculum</taxon>
    </lineage>
</organism>
<sequence length="265" mass="30540">MPQWFTSKSDPEDTRIQETLKSSCVLPRHIGIIMDGNGRWAKIKGKSRIAGHVAGVESVRDVVEASSQLGIENLTLFTFSIENWKRPKPEISALMKLLIKVLRKEAVKLLENDIRLEVIGDMEMIPDDVRKTLDETIELTRKNRGMAMTIALSYSGKWDITQACRHIALQVKQGLLDPETIDENLFASYLSTASMPDPDLLIRTSGEYRISNFMLWQNAYSEIIFSNTLWPDFRRNELYEAIREFQKRERRFGKTSEQLKTNEVE</sequence>
<comment type="function">
    <text evidence="1">Catalyzes the condensation of isopentenyl diphosphate (IPP) with allylic pyrophosphates generating different type of terpenoids.</text>
</comment>
<comment type="cofactor">
    <cofactor evidence="1">
        <name>Mg(2+)</name>
        <dbReference type="ChEBI" id="CHEBI:18420"/>
    </cofactor>
    <text evidence="1">Binds 2 magnesium ions per subunit.</text>
</comment>
<comment type="subunit">
    <text evidence="1">Homodimer.</text>
</comment>
<comment type="similarity">
    <text evidence="1">Belongs to the UPP synthase family.</text>
</comment>
<feature type="chain" id="PRO_0000123595" description="Isoprenyl transferase">
    <location>
        <begin position="1"/>
        <end position="265"/>
    </location>
</feature>
<feature type="active site" evidence="1">
    <location>
        <position position="35"/>
    </location>
</feature>
<feature type="active site" description="Proton acceptor" evidence="1">
    <location>
        <position position="83"/>
    </location>
</feature>
<feature type="binding site" evidence="1">
    <location>
        <position position="35"/>
    </location>
    <ligand>
        <name>Mg(2+)</name>
        <dbReference type="ChEBI" id="CHEBI:18420"/>
    </ligand>
</feature>
<feature type="binding site" evidence="1">
    <location>
        <begin position="36"/>
        <end position="39"/>
    </location>
    <ligand>
        <name>substrate</name>
    </ligand>
</feature>
<feature type="binding site" evidence="1">
    <location>
        <position position="40"/>
    </location>
    <ligand>
        <name>substrate</name>
    </ligand>
</feature>
<feature type="binding site" evidence="1">
    <location>
        <position position="48"/>
    </location>
    <ligand>
        <name>substrate</name>
    </ligand>
</feature>
<feature type="binding site" evidence="1">
    <location>
        <position position="52"/>
    </location>
    <ligand>
        <name>substrate</name>
    </ligand>
</feature>
<feature type="binding site" evidence="1">
    <location>
        <begin position="80"/>
        <end position="82"/>
    </location>
    <ligand>
        <name>substrate</name>
    </ligand>
</feature>
<feature type="binding site" evidence="1">
    <location>
        <position position="84"/>
    </location>
    <ligand>
        <name>substrate</name>
    </ligand>
</feature>
<feature type="binding site" evidence="1">
    <location>
        <position position="86"/>
    </location>
    <ligand>
        <name>substrate</name>
    </ligand>
</feature>
<feature type="binding site" evidence="1">
    <location>
        <position position="203"/>
    </location>
    <ligand>
        <name>substrate</name>
    </ligand>
</feature>
<feature type="binding site" evidence="1">
    <location>
        <begin position="209"/>
        <end position="211"/>
    </location>
    <ligand>
        <name>substrate</name>
    </ligand>
</feature>
<feature type="binding site" evidence="1">
    <location>
        <position position="222"/>
    </location>
    <ligand>
        <name>Mg(2+)</name>
        <dbReference type="ChEBI" id="CHEBI:18420"/>
    </ligand>
</feature>